<dbReference type="EC" id="3.4.22.-"/>
<dbReference type="EC" id="2.7.7.48" evidence="4"/>
<dbReference type="EC" id="3.6.1.15"/>
<dbReference type="EC" id="3.6.4.13"/>
<dbReference type="EMBL" id="AF533117">
    <property type="protein sequence ID" value="AAN07181.1"/>
    <property type="molecule type" value="Genomic_RNA"/>
</dbReference>
<dbReference type="EMBL" id="AF435866">
    <property type="protein sequence ID" value="AAL31567.1"/>
    <property type="molecule type" value="Genomic_RNA"/>
</dbReference>
<dbReference type="EMBL" id="AF435865">
    <property type="protein sequence ID" value="AAL31565.1"/>
    <property type="molecule type" value="Genomic_RNA"/>
</dbReference>
<dbReference type="SMR" id="Q8BCR0"/>
<dbReference type="IntAct" id="Q8BCR0">
    <property type="interactions" value="1"/>
</dbReference>
<dbReference type="MEROPS" id="C27.001"/>
<dbReference type="Proteomes" id="UP000007186">
    <property type="component" value="Genome"/>
</dbReference>
<dbReference type="Proteomes" id="UP000008993">
    <property type="component" value="Genome"/>
</dbReference>
<dbReference type="GO" id="GO:0033644">
    <property type="term" value="C:host cell membrane"/>
    <property type="evidence" value="ECO:0007669"/>
    <property type="project" value="UniProtKB-SubCell"/>
</dbReference>
<dbReference type="GO" id="GO:0044220">
    <property type="term" value="C:host cell perinuclear region of cytoplasm"/>
    <property type="evidence" value="ECO:0007669"/>
    <property type="project" value="UniProtKB-SubCell"/>
</dbReference>
<dbReference type="GO" id="GO:0016020">
    <property type="term" value="C:membrane"/>
    <property type="evidence" value="ECO:0007669"/>
    <property type="project" value="UniProtKB-KW"/>
</dbReference>
<dbReference type="GO" id="GO:0005524">
    <property type="term" value="F:ATP binding"/>
    <property type="evidence" value="ECO:0007669"/>
    <property type="project" value="UniProtKB-KW"/>
</dbReference>
<dbReference type="GO" id="GO:0016887">
    <property type="term" value="F:ATP hydrolysis activity"/>
    <property type="evidence" value="ECO:0007669"/>
    <property type="project" value="RHEA"/>
</dbReference>
<dbReference type="GO" id="GO:0004197">
    <property type="term" value="F:cysteine-type endopeptidase activity"/>
    <property type="evidence" value="ECO:0007669"/>
    <property type="project" value="InterPro"/>
</dbReference>
<dbReference type="GO" id="GO:0046872">
    <property type="term" value="F:metal ion binding"/>
    <property type="evidence" value="ECO:0007669"/>
    <property type="project" value="UniProtKB-KW"/>
</dbReference>
<dbReference type="GO" id="GO:0008174">
    <property type="term" value="F:mRNA methyltransferase activity"/>
    <property type="evidence" value="ECO:0007669"/>
    <property type="project" value="InterPro"/>
</dbReference>
<dbReference type="GO" id="GO:0003723">
    <property type="term" value="F:RNA binding"/>
    <property type="evidence" value="ECO:0007669"/>
    <property type="project" value="InterPro"/>
</dbReference>
<dbReference type="GO" id="GO:0003724">
    <property type="term" value="F:RNA helicase activity"/>
    <property type="evidence" value="ECO:0007669"/>
    <property type="project" value="UniProtKB-EC"/>
</dbReference>
<dbReference type="GO" id="GO:0003968">
    <property type="term" value="F:RNA-directed RNA polymerase activity"/>
    <property type="evidence" value="ECO:0007669"/>
    <property type="project" value="UniProtKB-KW"/>
</dbReference>
<dbReference type="GO" id="GO:0006351">
    <property type="term" value="P:DNA-templated transcription"/>
    <property type="evidence" value="ECO:0007669"/>
    <property type="project" value="InterPro"/>
</dbReference>
<dbReference type="GO" id="GO:0016556">
    <property type="term" value="P:mRNA modification"/>
    <property type="evidence" value="ECO:0007669"/>
    <property type="project" value="InterPro"/>
</dbReference>
<dbReference type="GO" id="GO:0006508">
    <property type="term" value="P:proteolysis"/>
    <property type="evidence" value="ECO:0007669"/>
    <property type="project" value="UniProtKB-KW"/>
</dbReference>
<dbReference type="GO" id="GO:0006396">
    <property type="term" value="P:RNA processing"/>
    <property type="evidence" value="ECO:0007669"/>
    <property type="project" value="InterPro"/>
</dbReference>
<dbReference type="GO" id="GO:0039694">
    <property type="term" value="P:viral RNA genome replication"/>
    <property type="evidence" value="ECO:0007669"/>
    <property type="project" value="InterPro"/>
</dbReference>
<dbReference type="CDD" id="cd21557">
    <property type="entry name" value="Macro_X_Nsp3-like"/>
    <property type="match status" value="1"/>
</dbReference>
<dbReference type="CDD" id="cd23260">
    <property type="entry name" value="Matonaviridae_RdRp"/>
    <property type="match status" value="1"/>
</dbReference>
<dbReference type="Gene3D" id="3.40.220.10">
    <property type="entry name" value="Leucine Aminopeptidase, subunit E, domain 1"/>
    <property type="match status" value="1"/>
</dbReference>
<dbReference type="Gene3D" id="3.40.50.300">
    <property type="entry name" value="P-loop containing nucleotide triphosphate hydrolases"/>
    <property type="match status" value="1"/>
</dbReference>
<dbReference type="InterPro" id="IPR027351">
    <property type="entry name" value="(+)RNA_virus_helicase_core_dom"/>
</dbReference>
<dbReference type="InterPro" id="IPR002588">
    <property type="entry name" value="Alphavirus-like_MT_dom"/>
</dbReference>
<dbReference type="InterPro" id="IPR043502">
    <property type="entry name" value="DNA/RNA_pol_sf"/>
</dbReference>
<dbReference type="InterPro" id="IPR002589">
    <property type="entry name" value="Macro_dom"/>
</dbReference>
<dbReference type="InterPro" id="IPR043472">
    <property type="entry name" value="Macro_dom-like"/>
</dbReference>
<dbReference type="InterPro" id="IPR044371">
    <property type="entry name" value="Macro_X_NSP3-like"/>
</dbReference>
<dbReference type="InterPro" id="IPR047306">
    <property type="entry name" value="Matonaviridae_RdRp"/>
</dbReference>
<dbReference type="InterPro" id="IPR027417">
    <property type="entry name" value="P-loop_NTPase"/>
</dbReference>
<dbReference type="InterPro" id="IPR008738">
    <property type="entry name" value="Peptidase_C27"/>
</dbReference>
<dbReference type="InterPro" id="IPR001788">
    <property type="entry name" value="RNA-dep_RNA_pol_alsuvir"/>
</dbReference>
<dbReference type="InterPro" id="IPR007094">
    <property type="entry name" value="RNA-dir_pol_PSvirus"/>
</dbReference>
<dbReference type="InterPro" id="IPR022245">
    <property type="entry name" value="Rubi_NSP_C"/>
</dbReference>
<dbReference type="InterPro" id="IPR044070">
    <property type="entry name" value="RUBV_NS_PRO"/>
</dbReference>
<dbReference type="PANTHER" id="PTHR11106">
    <property type="entry name" value="GANGLIOSIDE INDUCED DIFFERENTIATION ASSOCIATED PROTEIN 2-RELATED"/>
    <property type="match status" value="1"/>
</dbReference>
<dbReference type="PANTHER" id="PTHR11106:SF27">
    <property type="entry name" value="MACRO DOMAIN-CONTAINING PROTEIN"/>
    <property type="match status" value="1"/>
</dbReference>
<dbReference type="Pfam" id="PF01661">
    <property type="entry name" value="Macro"/>
    <property type="match status" value="1"/>
</dbReference>
<dbReference type="Pfam" id="PF05407">
    <property type="entry name" value="Peptidase_C27"/>
    <property type="match status" value="1"/>
</dbReference>
<dbReference type="Pfam" id="PF00978">
    <property type="entry name" value="RdRP_2"/>
    <property type="match status" value="1"/>
</dbReference>
<dbReference type="Pfam" id="PF12601">
    <property type="entry name" value="Rubi_NSP_C"/>
    <property type="match status" value="1"/>
</dbReference>
<dbReference type="Pfam" id="PF01443">
    <property type="entry name" value="Viral_helicase1"/>
    <property type="match status" value="1"/>
</dbReference>
<dbReference type="SMART" id="SM00506">
    <property type="entry name" value="A1pp"/>
    <property type="match status" value="1"/>
</dbReference>
<dbReference type="SUPFAM" id="SSF56672">
    <property type="entry name" value="DNA/RNA polymerases"/>
    <property type="match status" value="1"/>
</dbReference>
<dbReference type="SUPFAM" id="SSF52949">
    <property type="entry name" value="Macro domain-like"/>
    <property type="match status" value="1"/>
</dbReference>
<dbReference type="SUPFAM" id="SSF52540">
    <property type="entry name" value="P-loop containing nucleoside triphosphate hydrolases"/>
    <property type="match status" value="1"/>
</dbReference>
<dbReference type="PROSITE" id="PS51743">
    <property type="entry name" value="ALPHAVIRUS_MT"/>
    <property type="match status" value="1"/>
</dbReference>
<dbReference type="PROSITE" id="PS51154">
    <property type="entry name" value="MACRO"/>
    <property type="match status" value="1"/>
</dbReference>
<dbReference type="PROSITE" id="PS51657">
    <property type="entry name" value="PSRV_HELICASE"/>
    <property type="match status" value="1"/>
</dbReference>
<dbReference type="PROSITE" id="PS50507">
    <property type="entry name" value="RDRP_SSRNA_POS"/>
    <property type="match status" value="1"/>
</dbReference>
<dbReference type="PROSITE" id="PS51889">
    <property type="entry name" value="RUBV_NS_PRO"/>
    <property type="match status" value="1"/>
</dbReference>
<keyword id="KW-0067">ATP-binding</keyword>
<keyword id="KW-0106">Calcium</keyword>
<keyword id="KW-0347">Helicase</keyword>
<keyword id="KW-1035">Host cytoplasm</keyword>
<keyword id="KW-1043">Host membrane</keyword>
<keyword id="KW-0378">Hydrolase</keyword>
<keyword id="KW-0472">Membrane</keyword>
<keyword id="KW-0479">Metal-binding</keyword>
<keyword id="KW-0547">Nucleotide-binding</keyword>
<keyword id="KW-0548">Nucleotidyltransferase</keyword>
<keyword id="KW-0645">Protease</keyword>
<keyword id="KW-0696">RNA-directed RNA polymerase</keyword>
<keyword id="KW-0788">Thiol protease</keyword>
<keyword id="KW-0808">Transferase</keyword>
<keyword id="KW-0693">Viral RNA replication</keyword>
<keyword id="KW-0862">Zinc</keyword>
<organismHost>
    <name type="scientific">Homo sapiens</name>
    <name type="common">Human</name>
    <dbReference type="NCBI Taxonomy" id="9606"/>
</organismHost>
<proteinExistence type="inferred from homology"/>
<accession>Q8BCR0</accession>
<accession>Q8VA11</accession>
<accession>Q8VA13</accession>
<organism>
    <name type="scientific">Rubella virus (strain RN-UK86)</name>
    <name type="common">RUBV</name>
    <dbReference type="NCBI Taxonomy" id="376267"/>
    <lineage>
        <taxon>Viruses</taxon>
        <taxon>Riboviria</taxon>
        <taxon>Orthornavirae</taxon>
        <taxon>Kitrinoviricota</taxon>
        <taxon>Alsuviricetes</taxon>
        <taxon>Hepelivirales</taxon>
        <taxon>Matonaviridae</taxon>
        <taxon>Rubivirus</taxon>
        <taxon>Rubivirus rubellae</taxon>
    </lineage>
</organism>
<sequence length="2116" mass="230559">MEKLLDEVLAPGGPYNLTVGSWVRDHVRSIVEGAWEVRDVVSAAQKRAIVAVIPRPVFTQMQVSDHPALHAISRYTRRHWIEWGPKEALHVLIDPSPGLLREVARVERRWVALCLHRTARKLATALAETASEAWHADYVCALRGAPSGPFYVHPEDVPHGGRAVADRCLLYYTPMQMCELMRTIDATLLVAVDLWPVALAAHVGDDWDDLGIAWHLDHDGGCPADCRGAGAGPTPGYTRPCTTRIYQVLPDTAHPGRLYRCGPRLWTRDCAVAELSWEVAQHCGHQARVRAVRCTLPIRHVRSLQPSARVRLPDLVHLAEVGRWRWFSLPRPVFQRMLSYCKTLSPDAYYSERVFKFKNALSHSITLAGNVLQEGWKGTCAEEDALCAYVAFRAWQSNARLAGIMKSAKRCAADSLSVAGWLDTIWDAIKRFFGSVPLAERMEEWEQDAAVAAFDRGPLEDGGRHLDTVQPPKSPPRPEIAATWIVHAASADRHCACAPRCDVPRERPSAPACPPDDEALIPPWLFAERRALRCREWDFEALRARADTAAAPAPLAPRPARYPTVLYRHPAHHGPWLTLDEPGEADAALVLCDPLGQPLRGPERHFAAGAHMCAQARGLQAFVRVVPPPERPWADGGARAWAKFFRGCAWAQRLLGEPAVMHLPYTDGDVPKLIALALRTLAQQGAALALSVRDLPGGAAFDANAVTAAVRAGPGQFAATSPPPGDPPPPRRARRSQRHSDARGTPPPAPARDPPPPAPSPPAPPRAGDPDSPTSAEPADRARHAELEVVYEPSGPPTSTKADPDSDIVESYARAAGPVHLRVRDIMDPPPGCKVVVNAANEGLLAGSGVCGAIFANATAALAADCRRLAPCPTGEAVATPGHGCGYTHIIHAVAPRRPRDPAALEEGEALLERAYRSIVALAAARRWACVACPLLGAGVYGWSAAESLRAALAATRTEPAERVSLHICHPDRATLTHASVLVGAGLAARRVSPPPTEPLASCPAGDLGRPAQRSASPPATPLGDATAPEPRGCQGCELCRCTRVTNDRAYVNLWLERDRGATSWAMRIPEVVVYGPEHLATHFPLNHYSVLKPAEVRPPRGMCGSDMWRCRGWQGMPQVRCTPSNAHAALCRTGVPPRVSTRGGELDPNTCWLRAAANVAQAARACGAYTSAGCPKCAYGRALSEARTHEDFAALSQRWSASHADASPDGTGDPLDPLMETVGCACSRVWVGTEHEAPPDHLLVSLHRAPNGPWGVVLEVRARPEGGNPTGHFVCAVGGGPRRVSDRPHLWLAVPLSRGGGTCAATDEGLAQAYYDDLEVRRLGDDAMARAALASVQRPRKGPYNIRVWNMAAGAGKTTRILAAFTREDLYVCPTNALLHEIQAKLRARDIDIKNAATYERALTKPLAAYRRIYIDEAFTLGGEYCAFVASQTTAEVICVGDRDQCGPHYANNCRTPVPDRWPTERSRHTWRFPDCWAARLRAGLDYDIEGERTGTFACNLWDGRQVDLHLAFSRETVRRLHEAGIRAYTVREAQGMSVGTACIHVGRDGTDVALALTRDLAIVSLTRASDALYLHELEDGSLRAAGLSAFLDAGALAELKEVPAGIDRVVAVEQAPPPLPPADGIPEAQDVPPFCPRTLEELVFGRAGHPHYADLNRVTEGEREVRYMRISRHLLNKNHTEMPGTERVLSAVCAVRRYRAGEDGSTLRTAVARQHPRPFRQIPPPRVTAGVAQEWRMTYLRERIDLTDVYTQMGVAARELTDRYARRYPEIFAGMCTAQSLSVPAFLKATLKCVDAALGPRDTEDCHAAQGKAGLEIRAWAKEWVQVMSPHFRAIQKIIMRALRPQFLVAAGHTEPEVDAWWQAHYTTNAIEVDFTEFDMNQTLATRDVELEISAALLGLPCAEDYRALRAGSYCTLRELGSTETGCERTSGEPATLLHNTTVAMCMAMRMVPKGVRWAGIFQGDDMVIFLPEGARSAALKWTPAEVGLFGFHIPVKHVSTPTPSFCGHVGTAAGLFHDVMHQAIKVLCRRFDPDVLEEQQVALLDRLRGVYAALPDTVAANAAYYDYSAERVLAIVRELTAYARGRGLDHPATIGALEEIQTPYARANLHDAD</sequence>
<name>POLN_RUBVN</name>
<evidence type="ECO:0000250" key="1">
    <source>
        <dbReference type="UniProtKB" id="P13889"/>
    </source>
</evidence>
<evidence type="ECO:0000250" key="2">
    <source>
        <dbReference type="UniProtKB" id="Q86500"/>
    </source>
</evidence>
<evidence type="ECO:0000255" key="3">
    <source>
        <dbReference type="PROSITE-ProRule" id="PRU00490"/>
    </source>
</evidence>
<evidence type="ECO:0000255" key="4">
    <source>
        <dbReference type="PROSITE-ProRule" id="PRU00539"/>
    </source>
</evidence>
<evidence type="ECO:0000255" key="5">
    <source>
        <dbReference type="PROSITE-ProRule" id="PRU00990"/>
    </source>
</evidence>
<evidence type="ECO:0000255" key="6">
    <source>
        <dbReference type="PROSITE-ProRule" id="PRU01079"/>
    </source>
</evidence>
<evidence type="ECO:0000255" key="7">
    <source>
        <dbReference type="PROSITE-ProRule" id="PRU01237"/>
    </source>
</evidence>
<evidence type="ECO:0000256" key="8">
    <source>
        <dbReference type="SAM" id="MobiDB-lite"/>
    </source>
</evidence>
<protein>
    <recommendedName>
        <fullName>Non-structural polyprotein p200</fullName>
        <shortName>p200</shortName>
    </recommendedName>
    <component>
        <recommendedName>
            <fullName>Protease/methyltransferase p150</fullName>
            <shortName>p150</shortName>
            <ecNumber>3.4.22.-</ecNumber>
        </recommendedName>
    </component>
    <component>
        <recommendedName>
            <fullName>RNA-directed RNA polymerase p90</fullName>
            <shortName>p90</shortName>
            <ecNumber evidence="4">2.7.7.48</ecNumber>
            <ecNumber>3.6.1.15</ecNumber>
            <ecNumber>3.6.4.13</ecNumber>
        </recommendedName>
    </component>
</protein>
<comment type="function">
    <molecule>Non-structural polyprotein p200</molecule>
    <text evidence="2">Probable principal replicase for the negative-strand DNA, which replicates the 40S (+) genomic RNA into (-) antigenomic RNA. It cannot replicate the (-) into (+) until cleaved into p150 and p90 mature proteins.</text>
</comment>
<comment type="function">
    <molecule>Protease/methyltransferase p150</molecule>
    <text evidence="2">Protease that cleaves the precursor polyprotein into two mature products. Together with RNA-directed RNA polymerase p90, replicates the 40S genomic and antigenomic RNA by recognizing replications specific signals. The heterodimer P150/p90 is probably the principal replicase for positive-strand genomic RNA and the 24S subgenomic RNA, which codes for structural proteins. Responsible for the mRNA-capping of the viral mRNAs. This function is necessary since all viral RNAs are synthesized in the cytoplasm, and host capping enzymes are restricted to the nucleus. Forms fibers late in the infection that may be involved in cell-to-cell spread of the virus RNA in the absence of virus particle formation.</text>
</comment>
<comment type="function">
    <molecule>RNA-directed RNA polymerase p90</molecule>
    <text evidence="2">Together with protease/methyltransferase p150, replicates the 40S genomic and antigenomic RNA by recognizing replications specific signals. The heterodimer P150/p90 is probably the principal replicase for positive-strand genomic RNA and the 24S subgenomic RNA, which codes for structural proteins. A helicase activity is probably also present.</text>
</comment>
<comment type="catalytic activity">
    <reaction evidence="2 4">
        <text>RNA(n) + a ribonucleoside 5'-triphosphate = RNA(n+1) + diphosphate</text>
        <dbReference type="Rhea" id="RHEA:21248"/>
        <dbReference type="Rhea" id="RHEA-COMP:14527"/>
        <dbReference type="Rhea" id="RHEA-COMP:17342"/>
        <dbReference type="ChEBI" id="CHEBI:33019"/>
        <dbReference type="ChEBI" id="CHEBI:61557"/>
        <dbReference type="ChEBI" id="CHEBI:140395"/>
        <dbReference type="EC" id="2.7.7.48"/>
    </reaction>
</comment>
<comment type="catalytic activity">
    <reaction evidence="2">
        <text>a ribonucleoside 5'-triphosphate + H2O = a ribonucleoside 5'-diphosphate + phosphate + H(+)</text>
        <dbReference type="Rhea" id="RHEA:23680"/>
        <dbReference type="ChEBI" id="CHEBI:15377"/>
        <dbReference type="ChEBI" id="CHEBI:15378"/>
        <dbReference type="ChEBI" id="CHEBI:43474"/>
        <dbReference type="ChEBI" id="CHEBI:57930"/>
        <dbReference type="ChEBI" id="CHEBI:61557"/>
        <dbReference type="EC" id="3.6.1.15"/>
    </reaction>
</comment>
<comment type="catalytic activity">
    <reaction evidence="2">
        <text>ATP + H2O = ADP + phosphate + H(+)</text>
        <dbReference type="Rhea" id="RHEA:13065"/>
        <dbReference type="ChEBI" id="CHEBI:15377"/>
        <dbReference type="ChEBI" id="CHEBI:15378"/>
        <dbReference type="ChEBI" id="CHEBI:30616"/>
        <dbReference type="ChEBI" id="CHEBI:43474"/>
        <dbReference type="ChEBI" id="CHEBI:456216"/>
        <dbReference type="EC" id="3.6.4.13"/>
    </reaction>
</comment>
<comment type="cofactor">
    <cofactor evidence="7">
        <name>Zn(2+)</name>
        <dbReference type="ChEBI" id="CHEBI:29105"/>
    </cofactor>
    <text evidence="7">Zn(2+) is necessary for the protease activity. The protease can also function efficiently with Cd(2+) and Co(2+).</text>
</comment>
<comment type="subunit">
    <molecule>Protease/methyltransferase p150</molecule>
    <text evidence="2">Interacts with RNA-directed RNA polymerase p90. Interacts with host CALM1; this interaction is necessary for the protease activity and viral infectivity. Interacts with host C1QBP. Interacts with the capsid protein.</text>
</comment>
<comment type="subunit">
    <molecule>RNA-directed RNA polymerase p90</molecule>
    <text evidence="2">Interacts with human RB1/retinoblastoma protein. Interacts with protease/methyltransferase p150.</text>
</comment>
<comment type="subcellular location">
    <molecule>Non-structural polyprotein p200</molecule>
    <subcellularLocation>
        <location evidence="2">Host membrane</location>
    </subcellularLocation>
    <subcellularLocation>
        <location evidence="2">Host cytoplasm</location>
        <location evidence="2">Host perinuclear region</location>
    </subcellularLocation>
    <subcellularLocation>
        <location evidence="2">Host cytoplasm</location>
    </subcellularLocation>
    <text evidence="2">Localizes to cytoplasmic foci at 24 hpi.</text>
</comment>
<comment type="subcellular location">
    <molecule>Protease/methyltransferase p150</molecule>
    <subcellularLocation>
        <location evidence="2">Host membrane</location>
    </subcellularLocation>
    <subcellularLocation>
        <location evidence="2">Host cytoplasm</location>
        <location evidence="2">Host perinuclear region</location>
    </subcellularLocation>
    <subcellularLocation>
        <location evidence="2">Host cytoplasm</location>
    </subcellularLocation>
    <text evidence="1 2">At 36 hpi, localizes to the host cytoplasm, probably in vesicles inside host vacuoles of endosomal and lysosomal origin (By similarity). At 72 hpi, localizes to filamentous structures in the host cytoplasm (By similarity).</text>
</comment>
<comment type="subcellular location">
    <molecule>RNA-directed RNA polymerase p90</molecule>
    <subcellularLocation>
        <location evidence="2">Host membrane</location>
    </subcellularLocation>
    <subcellularLocation>
        <location evidence="2">Host cytoplasm</location>
    </subcellularLocation>
    <text evidence="2">Localizes to the cytoplasm and to the cytoplasmic fibers formed by protease/methyltransferase p150.</text>
</comment>
<comment type="domain">
    <molecule>Protease/methyltransferase p150</molecule>
    <text evidence="2">The N-terminus has a methyltransferase activity for mRNA-capping. The C-terminus harbors a protease active in cis or in trans which specifically cleaves and releases the two mature proteins. Both the N-terminus and C-terminus are required for fiber formation. The N-terminus is involved in associating with membranes. An EF-hand Ca(2+)-binding motif is present in the protease. Also contains 3 SH3-binding motifs that are responsible for the interaction with host C1QBP.</text>
</comment>
<comment type="PTM">
    <molecule>Non-structural polyprotein p200</molecule>
    <text evidence="2">Specific enzymatic cleavage by its own cysteine protease yield mature proteins p150 and p90.</text>
</comment>
<comment type="miscellaneous">
    <text evidence="2">Rubella virus in utero infection has frequently severe consequences on normal fetal development, collectively known as congenital rubella syndrome (CRS). The teratogenicity of the virus is possibly due to the interaction between the p90 protein and the human RB1/retinoblastoma protein.</text>
</comment>
<feature type="chain" id="PRO_0000240170" description="Non-structural polyprotein p200">
    <location>
        <begin position="1"/>
        <end position="2116"/>
    </location>
</feature>
<feature type="chain" id="PRO_0000240171" description="Protease/methyltransferase p150">
    <location>
        <begin position="1"/>
        <end position="1301"/>
    </location>
</feature>
<feature type="chain" id="PRO_0000240172" description="RNA-directed RNA polymerase p90">
    <location>
        <begin position="1302"/>
        <end position="2116"/>
    </location>
</feature>
<feature type="domain" description="Alphavirus-like MT" evidence="6">
    <location>
        <begin position="57"/>
        <end position="247"/>
    </location>
</feature>
<feature type="domain" description="Macro" evidence="3">
    <location>
        <begin position="806"/>
        <end position="985"/>
    </location>
</feature>
<feature type="domain" description="Peptidase C27" evidence="7">
    <location>
        <begin position="1000"/>
        <end position="1301"/>
    </location>
</feature>
<feature type="domain" description="(+)RNA virus helicase ATP-binding" evidence="5">
    <location>
        <begin position="1320"/>
        <end position="1468"/>
    </location>
</feature>
<feature type="domain" description="(+)RNA virus helicase C-terminal" evidence="5">
    <location>
        <begin position="1469"/>
        <end position="1609"/>
    </location>
</feature>
<feature type="domain" description="RdRp catalytic" evidence="4">
    <location>
        <begin position="1870"/>
        <end position="1981"/>
    </location>
</feature>
<feature type="region of interest" description="Required for efficient proteolysis and P150-P90 interaction" evidence="2">
    <location>
        <begin position="36"/>
        <end position="49"/>
    </location>
</feature>
<feature type="region of interest" description="Disordered" evidence="8">
    <location>
        <begin position="715"/>
        <end position="781"/>
    </location>
</feature>
<feature type="region of interest" description="Disordered" evidence="8">
    <location>
        <begin position="991"/>
        <end position="1030"/>
    </location>
</feature>
<feature type="region of interest" description="Interaction with host CALM1" evidence="7">
    <location>
        <begin position="1152"/>
        <end position="1183"/>
    </location>
</feature>
<feature type="region of interest" description="EF-hand-like" evidence="7">
    <location>
        <begin position="1193"/>
        <end position="1228"/>
    </location>
</feature>
<feature type="region of interest" description="Involved in P150-P90 interaction" evidence="2">
    <location>
        <begin position="1700"/>
        <end position="1900"/>
    </location>
</feature>
<feature type="short sequence motif" description="PxxPxR; class II SH3-binding" evidence="2">
    <location>
        <begin position="727"/>
        <end position="732"/>
    </location>
</feature>
<feature type="short sequence motif" description="PxxPxR; class II SH3-binding" evidence="2">
    <location>
        <begin position="747"/>
        <end position="752"/>
    </location>
</feature>
<feature type="short sequence motif" description="PxxPxR; class II SH3-binding" evidence="2">
    <location>
        <begin position="761"/>
        <end position="766"/>
    </location>
</feature>
<feature type="short sequence motif" description="Human RB1 binding" evidence="2">
    <location>
        <begin position="1902"/>
        <end position="1906"/>
    </location>
</feature>
<feature type="compositionally biased region" description="Pro residues" evidence="8">
    <location>
        <begin position="721"/>
        <end position="730"/>
    </location>
</feature>
<feature type="compositionally biased region" description="Pro residues" evidence="8">
    <location>
        <begin position="745"/>
        <end position="767"/>
    </location>
</feature>
<feature type="active site" description="For cysteine protease activity" evidence="7">
    <location>
        <position position="1152"/>
    </location>
</feature>
<feature type="active site" description="For cysteine protease activity" evidence="7">
    <location>
        <position position="1273"/>
    </location>
</feature>
<feature type="binding site" evidence="7">
    <location>
        <position position="1175"/>
    </location>
    <ligand>
        <name>Zn(2+)</name>
        <dbReference type="ChEBI" id="CHEBI:29105"/>
    </ligand>
</feature>
<feature type="binding site" evidence="7">
    <location>
        <position position="1178"/>
    </location>
    <ligand>
        <name>Zn(2+)</name>
        <dbReference type="ChEBI" id="CHEBI:29105"/>
    </ligand>
</feature>
<feature type="binding site" evidence="7">
    <location>
        <position position="1227"/>
    </location>
    <ligand>
        <name>Zn(2+)</name>
        <dbReference type="ChEBI" id="CHEBI:29105"/>
    </ligand>
</feature>
<feature type="binding site" evidence="7">
    <location>
        <position position="1273"/>
    </location>
    <ligand>
        <name>Zn(2+)</name>
        <dbReference type="ChEBI" id="CHEBI:29105"/>
    </ligand>
</feature>
<feature type="binding site" evidence="5">
    <location>
        <begin position="1352"/>
        <end position="1359"/>
    </location>
    <ligand>
        <name>a ribonucleoside 5'-triphosphate</name>
        <dbReference type="ChEBI" id="CHEBI:61557"/>
    </ligand>
</feature>
<feature type="site" description="Cleavage; autocatalytic" evidence="7">
    <location>
        <begin position="1301"/>
        <end position="1302"/>
    </location>
</feature>
<feature type="sequence variant" description="In strain: Isolate SUR-SK74 and ULR-GE84.">
    <original>D</original>
    <variation>G</variation>
    <location>
        <position position="427"/>
    </location>
</feature>
<feature type="sequence variant" description="In strain: Isolate SUR-SK74 and ULR-GE84.">
    <original>K</original>
    <variation>Q</variation>
    <location>
        <position position="672"/>
    </location>
</feature>
<feature type="sequence variant" description="In strain: Isolate ULR-GE84.">
    <original>G</original>
    <variation>R</variation>
    <location>
        <position position="697"/>
    </location>
</feature>
<feature type="sequence variant" description="In strain: Isolate SUR-SK74.">
    <original>F</original>
    <variation>L</variation>
    <location>
        <position position="717"/>
    </location>
</feature>
<feature type="sequence variant" description="In strain: Isolate SUR-SK74.">
    <original>P</original>
    <variation>T</variation>
    <location>
        <position position="723"/>
    </location>
</feature>
<feature type="sequence variant" description="In strain: Isolate SUR-SK74.">
    <original>H</original>
    <variation>P</variation>
    <location>
        <position position="739"/>
    </location>
</feature>
<feature type="sequence variant" description="In strain: Isolate SUR-SK74.">
    <original>A</original>
    <variation>V</variation>
    <location>
        <position position="751"/>
    </location>
</feature>
<feature type="sequence variant" description="In strain: Isolate SUR-SK74.">
    <original>A</original>
    <variation>V</variation>
    <location>
        <position position="767"/>
    </location>
</feature>
<feature type="sequence variant" description="In strain: Isolate SUR-SK74.">
    <original>DS</original>
    <variation>VP</variation>
    <location>
        <begin position="771"/>
        <end position="772"/>
    </location>
</feature>
<feature type="sequence variant" description="In strain: Isolate SUR-SK74.">
    <original>S</original>
    <variation>T</variation>
    <location>
        <position position="775"/>
    </location>
</feature>
<feature type="sequence variant" description="In strain: Isolate SUR-SK74.">
    <original>ST</original>
    <variation>PS</variation>
    <location>
        <begin position="799"/>
        <end position="800"/>
    </location>
</feature>
<feature type="sequence variant" description="In strain: Isolate SUR-SK74 and ULR-GE84.">
    <original>D</original>
    <variation>N</variation>
    <location>
        <position position="825"/>
    </location>
</feature>
<feature type="sequence variant" description="In strain: Isolate ULR-GE84.">
    <original>P</original>
    <variation>H</variation>
    <location>
        <position position="902"/>
    </location>
</feature>
<feature type="sequence variant" description="In strain: Isolate SUR-SK74.">
    <original>C</original>
    <variation>R</variation>
    <location>
        <position position="930"/>
    </location>
</feature>
<feature type="sequence variant" description="In strain: Isolate SUR-SK74.">
    <original>Y</original>
    <variation>H</variation>
    <location>
        <position position="941"/>
    </location>
</feature>
<feature type="sequence variant" description="In strain: Isolate SUR-SK74.">
    <original>T</original>
    <variation>A</variation>
    <location>
        <position position="958"/>
    </location>
</feature>
<feature type="sequence variant" description="In strain: Isolate SUR-SK74.">
    <original>L</original>
    <variation>P</variation>
    <location>
        <position position="1008"/>
    </location>
</feature>
<feature type="sequence variant" description="In strain: Isolate SUR-SK74.">
    <original>C</original>
    <variation>Y</variation>
    <location>
        <position position="1042"/>
    </location>
</feature>
<reference key="1">
    <citation type="journal article" date="2006" name="J. Clin. Virol.">
        <title>Improved RT-PCR for diagnosis and epidemiological surveillance of rubella.</title>
        <authorList>
            <person name="Cooray S."/>
            <person name="Warrener L."/>
            <person name="Jin L."/>
        </authorList>
    </citation>
    <scope>NUCLEOTIDE SEQUENCE [GENOMIC RNA]</scope>
</reference>
<reference key="2">
    <citation type="submission" date="2002-07" db="EMBL/GenBank/DDBJ databases">
        <title>Rubella virus isolate 'RN', nonstructural ORF.</title>
        <authorList>
            <person name="Cooray S.R."/>
            <person name="Jin L."/>
            <person name="Best J.M."/>
        </authorList>
    </citation>
    <scope>NUCLEOTIDE SEQUENCE [GENOMIC RNA]</scope>
    <source>
        <strain>RN</strain>
    </source>
</reference>
<reference key="3">
    <citation type="journal article" date="2003" name="Virus Res.">
        <title>Phylogenetic analysis of rubella virus including new genotype I isolates.</title>
        <authorList>
            <person name="Hofmann J."/>
            <person name="Renz M."/>
            <person name="Meyer S."/>
            <person name="von Haeseler A."/>
            <person name="Liebert U.G."/>
        </authorList>
    </citation>
    <scope>NUCLEOTIDE SEQUENCE [GENOMIC RNA]</scope>
    <source>
        <strain>Isolate SUR-SK74</strain>
        <strain>Isolate ULR-GE84</strain>
    </source>
</reference>